<protein>
    <recommendedName>
        <fullName evidence="1">3-dehydroquinate synthase</fullName>
        <shortName evidence="1">DHQS</shortName>
        <ecNumber evidence="1">4.2.3.4</ecNumber>
    </recommendedName>
</protein>
<keyword id="KW-0028">Amino-acid biosynthesis</keyword>
<keyword id="KW-0057">Aromatic amino acid biosynthesis</keyword>
<keyword id="KW-0170">Cobalt</keyword>
<keyword id="KW-0963">Cytoplasm</keyword>
<keyword id="KW-0456">Lyase</keyword>
<keyword id="KW-0479">Metal-binding</keyword>
<keyword id="KW-0520">NAD</keyword>
<keyword id="KW-0547">Nucleotide-binding</keyword>
<keyword id="KW-1185">Reference proteome</keyword>
<keyword id="KW-0862">Zinc</keyword>
<feature type="chain" id="PRO_0000140748" description="3-dehydroquinate synthase">
    <location>
        <begin position="1"/>
        <end position="359"/>
    </location>
</feature>
<feature type="binding site" evidence="1">
    <location>
        <begin position="106"/>
        <end position="110"/>
    </location>
    <ligand>
        <name>NAD(+)</name>
        <dbReference type="ChEBI" id="CHEBI:57540"/>
    </ligand>
</feature>
<feature type="binding site" evidence="1">
    <location>
        <begin position="130"/>
        <end position="131"/>
    </location>
    <ligand>
        <name>NAD(+)</name>
        <dbReference type="ChEBI" id="CHEBI:57540"/>
    </ligand>
</feature>
<feature type="binding site" evidence="1">
    <location>
        <position position="143"/>
    </location>
    <ligand>
        <name>NAD(+)</name>
        <dbReference type="ChEBI" id="CHEBI:57540"/>
    </ligand>
</feature>
<feature type="binding site" evidence="1">
    <location>
        <position position="152"/>
    </location>
    <ligand>
        <name>NAD(+)</name>
        <dbReference type="ChEBI" id="CHEBI:57540"/>
    </ligand>
</feature>
<feature type="binding site" evidence="1">
    <location>
        <position position="185"/>
    </location>
    <ligand>
        <name>Zn(2+)</name>
        <dbReference type="ChEBI" id="CHEBI:29105"/>
    </ligand>
</feature>
<feature type="binding site" evidence="1">
    <location>
        <position position="246"/>
    </location>
    <ligand>
        <name>Zn(2+)</name>
        <dbReference type="ChEBI" id="CHEBI:29105"/>
    </ligand>
</feature>
<feature type="binding site" evidence="1">
    <location>
        <position position="262"/>
    </location>
    <ligand>
        <name>Zn(2+)</name>
        <dbReference type="ChEBI" id="CHEBI:29105"/>
    </ligand>
</feature>
<sequence>MTNIEVKTRVKQYQIKIMINSLHHLGTLVTKVWCARQVAVVTDTNVGPYYAKLVTDELTAAGFKVRVMTVPAGEESKSWSQVQSLIDQLSAAHFSRSDGVLALGGGVVGDLAGFVASIYMRGIALIQVPTSLLAQVDSSVGGKTAIDLPTGKNLVGSFYQPDLVVIDPAILVTLPPRMLAEGYGEIVKCAALVGGDFWQSLHQITSVAAILPAAPDLIAASVAFKARVVMADEHEQGQRQLLNFGHTIGHAVELLADGQLMHGEAVAIGLVQVCRLFAAHGLAPTSLTSTLKARLMAVGLPTELPPIAPQAVAAVMQHDKKVHGTALTWVYLSAVGQPHLYPIAVTDLATWMGDLWSVS</sequence>
<name>AROB_LACPL</name>
<comment type="function">
    <text evidence="1">Catalyzes the conversion of 3-deoxy-D-arabino-heptulosonate 7-phosphate (DAHP) to dehydroquinate (DHQ).</text>
</comment>
<comment type="catalytic activity">
    <reaction evidence="1">
        <text>7-phospho-2-dehydro-3-deoxy-D-arabino-heptonate = 3-dehydroquinate + phosphate</text>
        <dbReference type="Rhea" id="RHEA:21968"/>
        <dbReference type="ChEBI" id="CHEBI:32364"/>
        <dbReference type="ChEBI" id="CHEBI:43474"/>
        <dbReference type="ChEBI" id="CHEBI:58394"/>
        <dbReference type="EC" id="4.2.3.4"/>
    </reaction>
</comment>
<comment type="cofactor">
    <cofactor evidence="1">
        <name>NAD(+)</name>
        <dbReference type="ChEBI" id="CHEBI:57540"/>
    </cofactor>
</comment>
<comment type="cofactor">
    <cofactor evidence="1">
        <name>Co(2+)</name>
        <dbReference type="ChEBI" id="CHEBI:48828"/>
    </cofactor>
    <cofactor evidence="1">
        <name>Zn(2+)</name>
        <dbReference type="ChEBI" id="CHEBI:29105"/>
    </cofactor>
    <text evidence="1">Binds 1 divalent metal cation per subunit. Can use either Co(2+) or Zn(2+).</text>
</comment>
<comment type="pathway">
    <text evidence="1">Metabolic intermediate biosynthesis; chorismate biosynthesis; chorismate from D-erythrose 4-phosphate and phosphoenolpyruvate: step 2/7.</text>
</comment>
<comment type="subcellular location">
    <subcellularLocation>
        <location evidence="1">Cytoplasm</location>
    </subcellularLocation>
</comment>
<comment type="similarity">
    <text evidence="1">Belongs to the sugar phosphate cyclases superfamily. Dehydroquinate synthase family.</text>
</comment>
<reference key="1">
    <citation type="journal article" date="2003" name="Proc. Natl. Acad. Sci. U.S.A.">
        <title>Complete genome sequence of Lactobacillus plantarum WCFS1.</title>
        <authorList>
            <person name="Kleerebezem M."/>
            <person name="Boekhorst J."/>
            <person name="van Kranenburg R."/>
            <person name="Molenaar D."/>
            <person name="Kuipers O.P."/>
            <person name="Leer R."/>
            <person name="Tarchini R."/>
            <person name="Peters S.A."/>
            <person name="Sandbrink H.M."/>
            <person name="Fiers M.W.E.J."/>
            <person name="Stiekema W."/>
            <person name="Klein Lankhorst R.M."/>
            <person name="Bron P.A."/>
            <person name="Hoffer S.M."/>
            <person name="Nierop Groot M.N."/>
            <person name="Kerkhoven R."/>
            <person name="De Vries M."/>
            <person name="Ursing B."/>
            <person name="De Vos W.M."/>
            <person name="Siezen R.J."/>
        </authorList>
    </citation>
    <scope>NUCLEOTIDE SEQUENCE [LARGE SCALE GENOMIC DNA]</scope>
    <source>
        <strain>ATCC BAA-793 / NCIMB 8826 / WCFS1</strain>
    </source>
</reference>
<reference key="2">
    <citation type="journal article" date="2012" name="J. Bacteriol.">
        <title>Complete resequencing and reannotation of the Lactobacillus plantarum WCFS1 genome.</title>
        <authorList>
            <person name="Siezen R.J."/>
            <person name="Francke C."/>
            <person name="Renckens B."/>
            <person name="Boekhorst J."/>
            <person name="Wels M."/>
            <person name="Kleerebezem M."/>
            <person name="van Hijum S.A."/>
        </authorList>
    </citation>
    <scope>NUCLEOTIDE SEQUENCE [LARGE SCALE GENOMIC DNA]</scope>
    <scope>GENOME REANNOTATION</scope>
    <source>
        <strain>ATCC BAA-793 / NCIMB 8826 / WCFS1</strain>
    </source>
</reference>
<gene>
    <name evidence="1" type="primary">aroB</name>
    <name type="ordered locus">lp_1086</name>
</gene>
<organism>
    <name type="scientific">Lactiplantibacillus plantarum (strain ATCC BAA-793 / NCIMB 8826 / WCFS1)</name>
    <name type="common">Lactobacillus plantarum</name>
    <dbReference type="NCBI Taxonomy" id="220668"/>
    <lineage>
        <taxon>Bacteria</taxon>
        <taxon>Bacillati</taxon>
        <taxon>Bacillota</taxon>
        <taxon>Bacilli</taxon>
        <taxon>Lactobacillales</taxon>
        <taxon>Lactobacillaceae</taxon>
        <taxon>Lactiplantibacillus</taxon>
    </lineage>
</organism>
<dbReference type="EC" id="4.2.3.4" evidence="1"/>
<dbReference type="EMBL" id="AL935263">
    <property type="protein sequence ID" value="CCC78491.1"/>
    <property type="molecule type" value="Genomic_DNA"/>
</dbReference>
<dbReference type="RefSeq" id="WP_011101252.1">
    <property type="nucleotide sequence ID" value="NC_004567.2"/>
</dbReference>
<dbReference type="RefSeq" id="YP_004889005.1">
    <property type="nucleotide sequence ID" value="NC_004567.2"/>
</dbReference>
<dbReference type="SMR" id="Q88XU0"/>
<dbReference type="STRING" id="220668.lp_1086"/>
<dbReference type="EnsemblBacteria" id="CCC78491">
    <property type="protein sequence ID" value="CCC78491"/>
    <property type="gene ID" value="lp_1086"/>
</dbReference>
<dbReference type="KEGG" id="lpl:lp_1086"/>
<dbReference type="PATRIC" id="fig|220668.9.peg.920"/>
<dbReference type="eggNOG" id="COG0337">
    <property type="taxonomic scope" value="Bacteria"/>
</dbReference>
<dbReference type="HOGENOM" id="CLU_001201_0_2_9"/>
<dbReference type="OrthoDB" id="9806583at2"/>
<dbReference type="PhylomeDB" id="Q88XU0"/>
<dbReference type="UniPathway" id="UPA00053">
    <property type="reaction ID" value="UER00085"/>
</dbReference>
<dbReference type="Proteomes" id="UP000000432">
    <property type="component" value="Chromosome"/>
</dbReference>
<dbReference type="GO" id="GO:0005737">
    <property type="term" value="C:cytoplasm"/>
    <property type="evidence" value="ECO:0007669"/>
    <property type="project" value="UniProtKB-SubCell"/>
</dbReference>
<dbReference type="GO" id="GO:0003856">
    <property type="term" value="F:3-dehydroquinate synthase activity"/>
    <property type="evidence" value="ECO:0007669"/>
    <property type="project" value="UniProtKB-UniRule"/>
</dbReference>
<dbReference type="GO" id="GO:0046872">
    <property type="term" value="F:metal ion binding"/>
    <property type="evidence" value="ECO:0007669"/>
    <property type="project" value="UniProtKB-KW"/>
</dbReference>
<dbReference type="GO" id="GO:0000166">
    <property type="term" value="F:nucleotide binding"/>
    <property type="evidence" value="ECO:0007669"/>
    <property type="project" value="UniProtKB-KW"/>
</dbReference>
<dbReference type="GO" id="GO:0008652">
    <property type="term" value="P:amino acid biosynthetic process"/>
    <property type="evidence" value="ECO:0007669"/>
    <property type="project" value="UniProtKB-KW"/>
</dbReference>
<dbReference type="GO" id="GO:0009073">
    <property type="term" value="P:aromatic amino acid family biosynthetic process"/>
    <property type="evidence" value="ECO:0007669"/>
    <property type="project" value="UniProtKB-KW"/>
</dbReference>
<dbReference type="GO" id="GO:0009423">
    <property type="term" value="P:chorismate biosynthetic process"/>
    <property type="evidence" value="ECO:0007669"/>
    <property type="project" value="UniProtKB-UniRule"/>
</dbReference>
<dbReference type="CDD" id="cd08195">
    <property type="entry name" value="DHQS"/>
    <property type="match status" value="1"/>
</dbReference>
<dbReference type="FunFam" id="3.40.50.1970:FF:000007">
    <property type="entry name" value="Pentafunctional AROM polypeptide"/>
    <property type="match status" value="1"/>
</dbReference>
<dbReference type="Gene3D" id="3.40.50.1970">
    <property type="match status" value="1"/>
</dbReference>
<dbReference type="Gene3D" id="1.20.1090.10">
    <property type="entry name" value="Dehydroquinate synthase-like - alpha domain"/>
    <property type="match status" value="1"/>
</dbReference>
<dbReference type="HAMAP" id="MF_00110">
    <property type="entry name" value="DHQ_synthase"/>
    <property type="match status" value="1"/>
</dbReference>
<dbReference type="InterPro" id="IPR050071">
    <property type="entry name" value="Dehydroquinate_synthase"/>
</dbReference>
<dbReference type="InterPro" id="IPR016037">
    <property type="entry name" value="DHQ_synth_AroB"/>
</dbReference>
<dbReference type="InterPro" id="IPR030963">
    <property type="entry name" value="DHQ_synth_fam"/>
</dbReference>
<dbReference type="InterPro" id="IPR030960">
    <property type="entry name" value="DHQS/DOIS_N"/>
</dbReference>
<dbReference type="InterPro" id="IPR056179">
    <property type="entry name" value="DHQS_C"/>
</dbReference>
<dbReference type="NCBIfam" id="TIGR01357">
    <property type="entry name" value="aroB"/>
    <property type="match status" value="1"/>
</dbReference>
<dbReference type="PANTHER" id="PTHR43622">
    <property type="entry name" value="3-DEHYDROQUINATE SYNTHASE"/>
    <property type="match status" value="1"/>
</dbReference>
<dbReference type="PANTHER" id="PTHR43622:SF7">
    <property type="entry name" value="3-DEHYDROQUINATE SYNTHASE, CHLOROPLASTIC"/>
    <property type="match status" value="1"/>
</dbReference>
<dbReference type="Pfam" id="PF01761">
    <property type="entry name" value="DHQ_synthase"/>
    <property type="match status" value="1"/>
</dbReference>
<dbReference type="Pfam" id="PF24621">
    <property type="entry name" value="DHQS_C"/>
    <property type="match status" value="1"/>
</dbReference>
<dbReference type="PIRSF" id="PIRSF001455">
    <property type="entry name" value="DHQ_synth"/>
    <property type="match status" value="1"/>
</dbReference>
<dbReference type="SUPFAM" id="SSF56796">
    <property type="entry name" value="Dehydroquinate synthase-like"/>
    <property type="match status" value="1"/>
</dbReference>
<accession>Q88XU0</accession>
<accession>F9UMQ2</accession>
<evidence type="ECO:0000255" key="1">
    <source>
        <dbReference type="HAMAP-Rule" id="MF_00110"/>
    </source>
</evidence>
<proteinExistence type="inferred from homology"/>